<evidence type="ECO:0000255" key="1">
    <source>
        <dbReference type="HAMAP-Rule" id="MF_00218"/>
    </source>
</evidence>
<evidence type="ECO:0000305" key="2"/>
<comment type="function">
    <text evidence="1">Catalyzes the decarboxylation of four acetate groups of uroporphyrinogen-III to yield coproporphyrinogen-III.</text>
</comment>
<comment type="catalytic activity">
    <reaction evidence="1">
        <text>uroporphyrinogen III + 4 H(+) = coproporphyrinogen III + 4 CO2</text>
        <dbReference type="Rhea" id="RHEA:19865"/>
        <dbReference type="ChEBI" id="CHEBI:15378"/>
        <dbReference type="ChEBI" id="CHEBI:16526"/>
        <dbReference type="ChEBI" id="CHEBI:57308"/>
        <dbReference type="ChEBI" id="CHEBI:57309"/>
        <dbReference type="EC" id="4.1.1.37"/>
    </reaction>
</comment>
<comment type="pathway">
    <text evidence="1">Porphyrin-containing compound metabolism; protoporphyrin-IX biosynthesis; coproporphyrinogen-III from 5-aminolevulinate: step 4/4.</text>
</comment>
<comment type="subunit">
    <text evidence="1">Homodimer.</text>
</comment>
<comment type="subcellular location">
    <subcellularLocation>
        <location evidence="1">Cytoplasm</location>
    </subcellularLocation>
</comment>
<comment type="similarity">
    <text evidence="1">Belongs to the uroporphyrinogen decarboxylase family.</text>
</comment>
<comment type="sequence caution" evidence="2">
    <conflict type="erroneous initiation">
        <sequence resource="EMBL-CDS" id="ABS77403"/>
    </conflict>
</comment>
<keyword id="KW-0963">Cytoplasm</keyword>
<keyword id="KW-0210">Decarboxylase</keyword>
<keyword id="KW-0456">Lyase</keyword>
<keyword id="KW-0627">Porphyrin biosynthesis</keyword>
<proteinExistence type="inferred from homology"/>
<feature type="chain" id="PRO_1000078069" description="Uroporphyrinogen decarboxylase">
    <location>
        <begin position="1"/>
        <end position="361"/>
    </location>
</feature>
<feature type="binding site" evidence="1">
    <location>
        <begin position="27"/>
        <end position="31"/>
    </location>
    <ligand>
        <name>substrate</name>
    </ligand>
</feature>
<feature type="binding site" evidence="1">
    <location>
        <position position="77"/>
    </location>
    <ligand>
        <name>substrate</name>
    </ligand>
</feature>
<feature type="binding site" evidence="1">
    <location>
        <position position="154"/>
    </location>
    <ligand>
        <name>substrate</name>
    </ligand>
</feature>
<feature type="binding site" evidence="1">
    <location>
        <position position="209"/>
    </location>
    <ligand>
        <name>substrate</name>
    </ligand>
</feature>
<feature type="binding site" evidence="1">
    <location>
        <position position="327"/>
    </location>
    <ligand>
        <name>substrate</name>
    </ligand>
</feature>
<feature type="site" description="Transition state stabilizer" evidence="1">
    <location>
        <position position="77"/>
    </location>
</feature>
<name>DCUP_COXBN</name>
<organism>
    <name type="scientific">Coxiella burnetii (strain Dugway 5J108-111)</name>
    <dbReference type="NCBI Taxonomy" id="434922"/>
    <lineage>
        <taxon>Bacteria</taxon>
        <taxon>Pseudomonadati</taxon>
        <taxon>Pseudomonadota</taxon>
        <taxon>Gammaproteobacteria</taxon>
        <taxon>Legionellales</taxon>
        <taxon>Coxiellaceae</taxon>
        <taxon>Coxiella</taxon>
    </lineage>
</organism>
<protein>
    <recommendedName>
        <fullName evidence="1">Uroporphyrinogen decarboxylase</fullName>
        <shortName evidence="1">UPD</shortName>
        <shortName evidence="1">URO-D</shortName>
        <ecNumber evidence="1">4.1.1.37</ecNumber>
    </recommendedName>
</protein>
<sequence>MLRLKNDRFIRALLRQPVDRTPVWIMRQAGRYLPEYRQLREKVPNFMAFCKTPELACEATLQPLRRFPLDAAIIFSDILTIPDAMGVDLHIAPTVGPVIRNPVRSAQDVNRLQMPAVEEALSYLFDAIRLTVKALDHRVPLIGFAGSPWTLACYMTEGQSSKTFLTARAMLYQQPDVFHTLLQKLTTLTIAYLNAQIKAGADVVMLFDTWGGLLTPSLYRQFSLDYLSQIAAEVVRQKNGRKIPLIFFTKNGGQWLESIANSGCDAVGLDWTTDIGQARRRVGDRVALQGNLDPAILLSNPESISTAAVDILKSYGQGSGHVFNLGHGIDPSTPIENVAALVEAVQNFSIKNEEPINSYYR</sequence>
<reference key="1">
    <citation type="journal article" date="2009" name="Infect. Immun.">
        <title>Comparative genomics reveal extensive transposon-mediated genomic plasticity and diversity among potential effector proteins within the genus Coxiella.</title>
        <authorList>
            <person name="Beare P.A."/>
            <person name="Unsworth N."/>
            <person name="Andoh M."/>
            <person name="Voth D.E."/>
            <person name="Omsland A."/>
            <person name="Gilk S.D."/>
            <person name="Williams K.P."/>
            <person name="Sobral B.W."/>
            <person name="Kupko J.J. III"/>
            <person name="Porcella S.F."/>
            <person name="Samuel J.E."/>
            <person name="Heinzen R.A."/>
        </authorList>
    </citation>
    <scope>NUCLEOTIDE SEQUENCE [LARGE SCALE GENOMIC DNA]</scope>
    <source>
        <strain>Dugway 5J108-111</strain>
    </source>
</reference>
<accession>A9KCZ5</accession>
<dbReference type="EC" id="4.1.1.37" evidence="1"/>
<dbReference type="EMBL" id="CP000733">
    <property type="protein sequence ID" value="ABS77403.2"/>
    <property type="status" value="ALT_INIT"/>
    <property type="molecule type" value="Genomic_DNA"/>
</dbReference>
<dbReference type="RefSeq" id="WP_043880964.1">
    <property type="nucleotide sequence ID" value="NC_009727.1"/>
</dbReference>
<dbReference type="SMR" id="A9KCZ5"/>
<dbReference type="KEGG" id="cbd:CBUD_1818"/>
<dbReference type="HOGENOM" id="CLU_040933_0_0_6"/>
<dbReference type="UniPathway" id="UPA00251">
    <property type="reaction ID" value="UER00321"/>
</dbReference>
<dbReference type="Proteomes" id="UP000008555">
    <property type="component" value="Chromosome"/>
</dbReference>
<dbReference type="GO" id="GO:0005829">
    <property type="term" value="C:cytosol"/>
    <property type="evidence" value="ECO:0007669"/>
    <property type="project" value="TreeGrafter"/>
</dbReference>
<dbReference type="GO" id="GO:0004853">
    <property type="term" value="F:uroporphyrinogen decarboxylase activity"/>
    <property type="evidence" value="ECO:0007669"/>
    <property type="project" value="UniProtKB-UniRule"/>
</dbReference>
<dbReference type="GO" id="GO:0019353">
    <property type="term" value="P:protoporphyrinogen IX biosynthetic process from glutamate"/>
    <property type="evidence" value="ECO:0007669"/>
    <property type="project" value="TreeGrafter"/>
</dbReference>
<dbReference type="CDD" id="cd00717">
    <property type="entry name" value="URO-D"/>
    <property type="match status" value="1"/>
</dbReference>
<dbReference type="FunFam" id="3.20.20.210:FF:000017">
    <property type="entry name" value="Uroporphyrinogen decarboxylase"/>
    <property type="match status" value="1"/>
</dbReference>
<dbReference type="Gene3D" id="3.20.20.210">
    <property type="match status" value="1"/>
</dbReference>
<dbReference type="HAMAP" id="MF_00218">
    <property type="entry name" value="URO_D"/>
    <property type="match status" value="1"/>
</dbReference>
<dbReference type="InterPro" id="IPR038071">
    <property type="entry name" value="UROD/MetE-like_sf"/>
</dbReference>
<dbReference type="InterPro" id="IPR006361">
    <property type="entry name" value="Uroporphyrinogen_deCO2ase_HemE"/>
</dbReference>
<dbReference type="InterPro" id="IPR000257">
    <property type="entry name" value="Uroporphyrinogen_deCOase"/>
</dbReference>
<dbReference type="NCBIfam" id="TIGR01464">
    <property type="entry name" value="hemE"/>
    <property type="match status" value="1"/>
</dbReference>
<dbReference type="PANTHER" id="PTHR21091">
    <property type="entry name" value="METHYLTETRAHYDROFOLATE:HOMOCYSTEINE METHYLTRANSFERASE RELATED"/>
    <property type="match status" value="1"/>
</dbReference>
<dbReference type="PANTHER" id="PTHR21091:SF169">
    <property type="entry name" value="UROPORPHYRINOGEN DECARBOXYLASE"/>
    <property type="match status" value="1"/>
</dbReference>
<dbReference type="Pfam" id="PF01208">
    <property type="entry name" value="URO-D"/>
    <property type="match status" value="1"/>
</dbReference>
<dbReference type="SUPFAM" id="SSF51726">
    <property type="entry name" value="UROD/MetE-like"/>
    <property type="match status" value="1"/>
</dbReference>
<dbReference type="PROSITE" id="PS00906">
    <property type="entry name" value="UROD_1"/>
    <property type="match status" value="1"/>
</dbReference>
<dbReference type="PROSITE" id="PS00907">
    <property type="entry name" value="UROD_2"/>
    <property type="match status" value="1"/>
</dbReference>
<gene>
    <name evidence="1" type="primary">hemE</name>
    <name type="ordered locus">CBUD_1818</name>
</gene>